<gene>
    <name evidence="1" type="primary">nhaB</name>
    <name type="ordered locus">PputGB1_3630</name>
</gene>
<name>NHAB_PSEPG</name>
<evidence type="ECO:0000255" key="1">
    <source>
        <dbReference type="HAMAP-Rule" id="MF_01599"/>
    </source>
</evidence>
<feature type="chain" id="PRO_0000333113" description="Na(+)/H(+) antiporter NhaB">
    <location>
        <begin position="1"/>
        <end position="500"/>
    </location>
</feature>
<feature type="transmembrane region" description="Helical" evidence="1">
    <location>
        <begin position="11"/>
        <end position="31"/>
    </location>
</feature>
<feature type="transmembrane region" description="Helical" evidence="1">
    <location>
        <begin position="34"/>
        <end position="54"/>
    </location>
</feature>
<feature type="transmembrane region" description="Helical" evidence="1">
    <location>
        <begin position="58"/>
        <end position="78"/>
    </location>
</feature>
<feature type="transmembrane region" description="Helical" evidence="1">
    <location>
        <begin position="96"/>
        <end position="116"/>
    </location>
</feature>
<feature type="transmembrane region" description="Helical" evidence="1">
    <location>
        <begin position="129"/>
        <end position="149"/>
    </location>
</feature>
<feature type="transmembrane region" description="Helical" evidence="1">
    <location>
        <begin position="150"/>
        <end position="170"/>
    </location>
</feature>
<feature type="transmembrane region" description="Helical" evidence="1">
    <location>
        <begin position="205"/>
        <end position="225"/>
    </location>
</feature>
<feature type="transmembrane region" description="Helical" evidence="1">
    <location>
        <begin position="241"/>
        <end position="261"/>
    </location>
</feature>
<feature type="transmembrane region" description="Helical" evidence="1">
    <location>
        <begin position="311"/>
        <end position="331"/>
    </location>
</feature>
<feature type="transmembrane region" description="Helical" evidence="1">
    <location>
        <begin position="350"/>
        <end position="370"/>
    </location>
</feature>
<feature type="transmembrane region" description="Helical" evidence="1">
    <location>
        <begin position="394"/>
        <end position="414"/>
    </location>
</feature>
<feature type="transmembrane region" description="Helical" evidence="1">
    <location>
        <begin position="450"/>
        <end position="470"/>
    </location>
</feature>
<feature type="transmembrane region" description="Helical" evidence="1">
    <location>
        <begin position="477"/>
        <end position="497"/>
    </location>
</feature>
<sequence>MSRSLTGALAHGFLGQSPLWYKAIICLFLVLNPLLLVTVGPVAAGWALVLEFIFTLGMALKCYPLMPGGLLLVEALLLQMTTPQALYEELQHNFPVILLLMFMVAGIHFMKELLLFLFSRILLGVRSKAILSLLFCVLSAFLSAFLDALTVTAVIISAAVGFYAVYHRVASGANPREDSALDSDQQVAQLHREDLDQFRAFLRSLLMHGAVGTALGGVCTLVGEPQNLLIGHEMGWHFADFFFKVAPVSLPVLGAGLLTCVLLEKLRLFGYGTLMPEPVRQVLAAYAAEDDAARTQAQRIALWVQGLAALILIICLGLHVAEVGLIGLMVIVLITAFTGITDEHRLGRAFQDAMPFTSLLVVFFAVVAVIHQQQLFSPLISWVLTLPTEQQPGMLYLANGLLSAISDNVFVATIYITEVKQAFLNGGMSREHFETLAVAINTGTNLPSVATPNGQAAFLFLLTSAIAPLIRLSYGRMVWMALPYTVVMGGLGWWAVTYWL</sequence>
<accession>B0KMR7</accession>
<comment type="function">
    <text evidence="1">Na(+)/H(+) antiporter that extrudes sodium in exchange for external protons.</text>
</comment>
<comment type="catalytic activity">
    <reaction evidence="1">
        <text>2 Na(+)(in) + 3 H(+)(out) = 2 Na(+)(out) + 3 H(+)(in)</text>
        <dbReference type="Rhea" id="RHEA:29247"/>
        <dbReference type="ChEBI" id="CHEBI:15378"/>
        <dbReference type="ChEBI" id="CHEBI:29101"/>
    </reaction>
    <physiologicalReaction direction="left-to-right" evidence="1">
        <dbReference type="Rhea" id="RHEA:29248"/>
    </physiologicalReaction>
</comment>
<comment type="subcellular location">
    <subcellularLocation>
        <location evidence="1">Cell inner membrane</location>
        <topology evidence="1">Multi-pass membrane protein</topology>
    </subcellularLocation>
</comment>
<comment type="similarity">
    <text evidence="1">Belongs to the NhaB Na(+)/H(+) (TC 2.A.34) antiporter family.</text>
</comment>
<keyword id="KW-0050">Antiport</keyword>
<keyword id="KW-0997">Cell inner membrane</keyword>
<keyword id="KW-1003">Cell membrane</keyword>
<keyword id="KW-0406">Ion transport</keyword>
<keyword id="KW-0472">Membrane</keyword>
<keyword id="KW-0915">Sodium</keyword>
<keyword id="KW-0739">Sodium transport</keyword>
<keyword id="KW-0812">Transmembrane</keyword>
<keyword id="KW-1133">Transmembrane helix</keyword>
<keyword id="KW-0813">Transport</keyword>
<organism>
    <name type="scientific">Pseudomonas putida (strain GB-1)</name>
    <dbReference type="NCBI Taxonomy" id="76869"/>
    <lineage>
        <taxon>Bacteria</taxon>
        <taxon>Pseudomonadati</taxon>
        <taxon>Pseudomonadota</taxon>
        <taxon>Gammaproteobacteria</taxon>
        <taxon>Pseudomonadales</taxon>
        <taxon>Pseudomonadaceae</taxon>
        <taxon>Pseudomonas</taxon>
    </lineage>
</organism>
<dbReference type="EMBL" id="CP000926">
    <property type="protein sequence ID" value="ABY99521.1"/>
    <property type="molecule type" value="Genomic_DNA"/>
</dbReference>
<dbReference type="RefSeq" id="WP_012273232.1">
    <property type="nucleotide sequence ID" value="NC_010322.1"/>
</dbReference>
<dbReference type="SMR" id="B0KMR7"/>
<dbReference type="KEGG" id="ppg:PputGB1_3630"/>
<dbReference type="eggNOG" id="COG3067">
    <property type="taxonomic scope" value="Bacteria"/>
</dbReference>
<dbReference type="HOGENOM" id="CLU_041110_0_0_6"/>
<dbReference type="Proteomes" id="UP000002157">
    <property type="component" value="Chromosome"/>
</dbReference>
<dbReference type="GO" id="GO:0005886">
    <property type="term" value="C:plasma membrane"/>
    <property type="evidence" value="ECO:0007669"/>
    <property type="project" value="UniProtKB-SubCell"/>
</dbReference>
<dbReference type="GO" id="GO:0015385">
    <property type="term" value="F:sodium:proton antiporter activity"/>
    <property type="evidence" value="ECO:0007669"/>
    <property type="project" value="InterPro"/>
</dbReference>
<dbReference type="HAMAP" id="MF_01599">
    <property type="entry name" value="NhaB"/>
    <property type="match status" value="1"/>
</dbReference>
<dbReference type="InterPro" id="IPR004671">
    <property type="entry name" value="Na+/H+_antiporter_NhaB"/>
</dbReference>
<dbReference type="NCBIfam" id="NF007093">
    <property type="entry name" value="PRK09547.1"/>
    <property type="match status" value="1"/>
</dbReference>
<dbReference type="PANTHER" id="PTHR43302:SF1">
    <property type="entry name" value="NA(+)_H(+) ANTIPORTER NHAB"/>
    <property type="match status" value="1"/>
</dbReference>
<dbReference type="PANTHER" id="PTHR43302">
    <property type="entry name" value="TRANSPORTER ARSB-RELATED"/>
    <property type="match status" value="1"/>
</dbReference>
<dbReference type="Pfam" id="PF06450">
    <property type="entry name" value="NhaB"/>
    <property type="match status" value="1"/>
</dbReference>
<reference key="1">
    <citation type="submission" date="2008-01" db="EMBL/GenBank/DDBJ databases">
        <title>Complete sequence of Pseudomonas putida GB-1.</title>
        <authorList>
            <consortium name="US DOE Joint Genome Institute"/>
            <person name="Copeland A."/>
            <person name="Lucas S."/>
            <person name="Lapidus A."/>
            <person name="Barry K."/>
            <person name="Glavina del Rio T."/>
            <person name="Dalin E."/>
            <person name="Tice H."/>
            <person name="Pitluck S."/>
            <person name="Bruce D."/>
            <person name="Goodwin L."/>
            <person name="Chertkov O."/>
            <person name="Brettin T."/>
            <person name="Detter J.C."/>
            <person name="Han C."/>
            <person name="Kuske C.R."/>
            <person name="Schmutz J."/>
            <person name="Larimer F."/>
            <person name="Land M."/>
            <person name="Hauser L."/>
            <person name="Kyrpides N."/>
            <person name="Kim E."/>
            <person name="McCarthy J.K."/>
            <person name="Richardson P."/>
        </authorList>
    </citation>
    <scope>NUCLEOTIDE SEQUENCE [LARGE SCALE GENOMIC DNA]</scope>
    <source>
        <strain>GB-1</strain>
    </source>
</reference>
<proteinExistence type="inferred from homology"/>
<protein>
    <recommendedName>
        <fullName evidence="1">Na(+)/H(+) antiporter NhaB</fullName>
    </recommendedName>
    <alternativeName>
        <fullName evidence="1">Sodium/proton antiporter NhaB</fullName>
    </alternativeName>
</protein>